<evidence type="ECO:0000255" key="1">
    <source>
        <dbReference type="HAMAP-Rule" id="MF_00031"/>
    </source>
</evidence>
<dbReference type="EMBL" id="CP000786">
    <property type="protein sequence ID" value="ABZ97608.1"/>
    <property type="molecule type" value="Genomic_DNA"/>
</dbReference>
<dbReference type="RefSeq" id="WP_012388487.1">
    <property type="nucleotide sequence ID" value="NC_010602.1"/>
</dbReference>
<dbReference type="SMR" id="B0SQF0"/>
<dbReference type="STRING" id="456481.LEPBI_I1501"/>
<dbReference type="KEGG" id="lbi:LEPBI_I1501"/>
<dbReference type="HOGENOM" id="CLU_087936_3_1_12"/>
<dbReference type="OrthoDB" id="5293449at2"/>
<dbReference type="BioCyc" id="LBIF456481:LEPBI_RS07375-MONOMER"/>
<dbReference type="Proteomes" id="UP000001847">
    <property type="component" value="Chromosome I"/>
</dbReference>
<dbReference type="GO" id="GO:0005737">
    <property type="term" value="C:cytoplasm"/>
    <property type="evidence" value="ECO:0007669"/>
    <property type="project" value="UniProtKB-SubCell"/>
</dbReference>
<dbReference type="GO" id="GO:0009379">
    <property type="term" value="C:Holliday junction helicase complex"/>
    <property type="evidence" value="ECO:0007669"/>
    <property type="project" value="InterPro"/>
</dbReference>
<dbReference type="GO" id="GO:0048476">
    <property type="term" value="C:Holliday junction resolvase complex"/>
    <property type="evidence" value="ECO:0007669"/>
    <property type="project" value="UniProtKB-UniRule"/>
</dbReference>
<dbReference type="GO" id="GO:0005524">
    <property type="term" value="F:ATP binding"/>
    <property type="evidence" value="ECO:0007669"/>
    <property type="project" value="InterPro"/>
</dbReference>
<dbReference type="GO" id="GO:0000400">
    <property type="term" value="F:four-way junction DNA binding"/>
    <property type="evidence" value="ECO:0007669"/>
    <property type="project" value="UniProtKB-UniRule"/>
</dbReference>
<dbReference type="GO" id="GO:0009378">
    <property type="term" value="F:four-way junction helicase activity"/>
    <property type="evidence" value="ECO:0007669"/>
    <property type="project" value="InterPro"/>
</dbReference>
<dbReference type="GO" id="GO:0006310">
    <property type="term" value="P:DNA recombination"/>
    <property type="evidence" value="ECO:0007669"/>
    <property type="project" value="UniProtKB-UniRule"/>
</dbReference>
<dbReference type="GO" id="GO:0006281">
    <property type="term" value="P:DNA repair"/>
    <property type="evidence" value="ECO:0007669"/>
    <property type="project" value="UniProtKB-UniRule"/>
</dbReference>
<dbReference type="CDD" id="cd14332">
    <property type="entry name" value="UBA_RuvA_C"/>
    <property type="match status" value="1"/>
</dbReference>
<dbReference type="Gene3D" id="1.10.150.20">
    <property type="entry name" value="5' to 3' exonuclease, C-terminal subdomain"/>
    <property type="match status" value="1"/>
</dbReference>
<dbReference type="Gene3D" id="1.10.8.10">
    <property type="entry name" value="DNA helicase RuvA subunit, C-terminal domain"/>
    <property type="match status" value="1"/>
</dbReference>
<dbReference type="Gene3D" id="2.40.50.140">
    <property type="entry name" value="Nucleic acid-binding proteins"/>
    <property type="match status" value="1"/>
</dbReference>
<dbReference type="HAMAP" id="MF_00031">
    <property type="entry name" value="DNA_HJ_migration_RuvA"/>
    <property type="match status" value="1"/>
</dbReference>
<dbReference type="InterPro" id="IPR013849">
    <property type="entry name" value="DNA_helicase_Holl-junc_RuvA_I"/>
</dbReference>
<dbReference type="InterPro" id="IPR012340">
    <property type="entry name" value="NA-bd_OB-fold"/>
</dbReference>
<dbReference type="InterPro" id="IPR000085">
    <property type="entry name" value="RuvA"/>
</dbReference>
<dbReference type="InterPro" id="IPR010994">
    <property type="entry name" value="RuvA_2-like"/>
</dbReference>
<dbReference type="InterPro" id="IPR011114">
    <property type="entry name" value="RuvA_C"/>
</dbReference>
<dbReference type="InterPro" id="IPR036267">
    <property type="entry name" value="RuvA_C_sf"/>
</dbReference>
<dbReference type="NCBIfam" id="TIGR00084">
    <property type="entry name" value="ruvA"/>
    <property type="match status" value="1"/>
</dbReference>
<dbReference type="Pfam" id="PF14520">
    <property type="entry name" value="HHH_5"/>
    <property type="match status" value="1"/>
</dbReference>
<dbReference type="Pfam" id="PF01330">
    <property type="entry name" value="RuvA_N"/>
    <property type="match status" value="1"/>
</dbReference>
<dbReference type="SUPFAM" id="SSF46929">
    <property type="entry name" value="DNA helicase RuvA subunit, C-terminal domain"/>
    <property type="match status" value="1"/>
</dbReference>
<dbReference type="SUPFAM" id="SSF50249">
    <property type="entry name" value="Nucleic acid-binding proteins"/>
    <property type="match status" value="1"/>
</dbReference>
<dbReference type="SUPFAM" id="SSF47781">
    <property type="entry name" value="RuvA domain 2-like"/>
    <property type="match status" value="1"/>
</dbReference>
<name>RUVA_LEPBP</name>
<sequence>MIASLRGKLLQLEIDRLVVEVSGVGYEVMIPFPLHLECKDKLNTEIYIHTFHSITDRGQRLFGFGSKKDRESFELIKSLHGIGELTALKILSFFQADDLYQIAKADDKKTLEKIPKVKGKTSEKILFEIKQNLKKFEMFLNEGTTESSFVDRETDLATLALIQLGFDEKSATKQVADAKKLNPGLSASDIVKQVITGTR</sequence>
<comment type="function">
    <text evidence="1">The RuvA-RuvB-RuvC complex processes Holliday junction (HJ) DNA during genetic recombination and DNA repair, while the RuvA-RuvB complex plays an important role in the rescue of blocked DNA replication forks via replication fork reversal (RFR). RuvA specifically binds to HJ cruciform DNA, conferring on it an open structure. The RuvB hexamer acts as an ATP-dependent pump, pulling dsDNA into and through the RuvAB complex. HJ branch migration allows RuvC to scan DNA until it finds its consensus sequence, where it cleaves and resolves the cruciform DNA.</text>
</comment>
<comment type="subunit">
    <text evidence="1">Homotetramer. Forms an RuvA(8)-RuvB(12)-Holliday junction (HJ) complex. HJ DNA is sandwiched between 2 RuvA tetramers; dsDNA enters through RuvA and exits via RuvB. An RuvB hexamer assembles on each DNA strand where it exits the tetramer. Each RuvB hexamer is contacted by two RuvA subunits (via domain III) on 2 adjacent RuvB subunits; this complex drives branch migration. In the full resolvosome a probable DNA-RuvA(4)-RuvB(12)-RuvC(2) complex forms which resolves the HJ.</text>
</comment>
<comment type="subcellular location">
    <subcellularLocation>
        <location evidence="1">Cytoplasm</location>
    </subcellularLocation>
</comment>
<comment type="domain">
    <text evidence="1">Has three domains with a flexible linker between the domains II and III and assumes an 'L' shape. Domain III is highly mobile and contacts RuvB.</text>
</comment>
<comment type="similarity">
    <text evidence="1">Belongs to the RuvA family.</text>
</comment>
<gene>
    <name evidence="1" type="primary">ruvA</name>
    <name type="ordered locus">LEPBI_I1501</name>
</gene>
<organism>
    <name type="scientific">Leptospira biflexa serovar Patoc (strain Patoc 1 / ATCC 23582 / Paris)</name>
    <dbReference type="NCBI Taxonomy" id="456481"/>
    <lineage>
        <taxon>Bacteria</taxon>
        <taxon>Pseudomonadati</taxon>
        <taxon>Spirochaetota</taxon>
        <taxon>Spirochaetia</taxon>
        <taxon>Leptospirales</taxon>
        <taxon>Leptospiraceae</taxon>
        <taxon>Leptospira</taxon>
    </lineage>
</organism>
<feature type="chain" id="PRO_1000090332" description="Holliday junction branch migration complex subunit RuvA">
    <location>
        <begin position="1"/>
        <end position="199"/>
    </location>
</feature>
<feature type="region of interest" description="Domain I" evidence="1">
    <location>
        <begin position="1"/>
        <end position="65"/>
    </location>
</feature>
<feature type="region of interest" description="Domain II" evidence="1">
    <location>
        <begin position="66"/>
        <end position="144"/>
    </location>
</feature>
<feature type="region of interest" description="Flexible linker" evidence="1">
    <location>
        <begin position="145"/>
        <end position="155"/>
    </location>
</feature>
<feature type="region of interest" description="Domain III" evidence="1">
    <location>
        <begin position="155"/>
        <end position="199"/>
    </location>
</feature>
<accession>B0SQF0</accession>
<protein>
    <recommendedName>
        <fullName evidence="1">Holliday junction branch migration complex subunit RuvA</fullName>
    </recommendedName>
</protein>
<proteinExistence type="inferred from homology"/>
<reference key="1">
    <citation type="journal article" date="2008" name="PLoS ONE">
        <title>Genome sequence of the saprophyte Leptospira biflexa provides insights into the evolution of Leptospira and the pathogenesis of leptospirosis.</title>
        <authorList>
            <person name="Picardeau M."/>
            <person name="Bulach D.M."/>
            <person name="Bouchier C."/>
            <person name="Zuerner R.L."/>
            <person name="Zidane N."/>
            <person name="Wilson P.J."/>
            <person name="Creno S."/>
            <person name="Kuczek E.S."/>
            <person name="Bommezzadri S."/>
            <person name="Davis J.C."/>
            <person name="McGrath A."/>
            <person name="Johnson M.J."/>
            <person name="Boursaux-Eude C."/>
            <person name="Seemann T."/>
            <person name="Rouy Z."/>
            <person name="Coppel R.L."/>
            <person name="Rood J.I."/>
            <person name="Lajus A."/>
            <person name="Davies J.K."/>
            <person name="Medigue C."/>
            <person name="Adler B."/>
        </authorList>
    </citation>
    <scope>NUCLEOTIDE SEQUENCE [LARGE SCALE GENOMIC DNA]</scope>
    <source>
        <strain>Patoc 1 / ATCC 23582 / Paris</strain>
    </source>
</reference>
<keyword id="KW-0963">Cytoplasm</keyword>
<keyword id="KW-0227">DNA damage</keyword>
<keyword id="KW-0233">DNA recombination</keyword>
<keyword id="KW-0234">DNA repair</keyword>
<keyword id="KW-0238">DNA-binding</keyword>
<keyword id="KW-1185">Reference proteome</keyword>